<comment type="function">
    <text evidence="1">Presumably involved in the processing and regular turnover of intracellular proteins. Catalyzes the removal of unsubstituted N-terminal amino acids from various peptides.</text>
</comment>
<comment type="catalytic activity">
    <reaction evidence="1">
        <text>Release of an N-terminal amino acid, Xaa-|-Yaa-, in which Xaa is preferably Leu, but may be other amino acids including Pro although not Arg or Lys, and Yaa may be Pro. Amino acid amides and methyl esters are also readily hydrolyzed, but rates on arylamides are exceedingly low.</text>
        <dbReference type="EC" id="3.4.11.1"/>
    </reaction>
</comment>
<comment type="catalytic activity">
    <reaction evidence="1">
        <text>Release of an N-terminal amino acid, preferentially leucine, but not glutamic or aspartic acids.</text>
        <dbReference type="EC" id="3.4.11.10"/>
    </reaction>
</comment>
<comment type="cofactor">
    <cofactor evidence="1">
        <name>Mn(2+)</name>
        <dbReference type="ChEBI" id="CHEBI:29035"/>
    </cofactor>
    <text evidence="1">Binds 2 manganese ions per subunit.</text>
</comment>
<comment type="subcellular location">
    <subcellularLocation>
        <location evidence="1">Cytoplasm</location>
    </subcellularLocation>
</comment>
<comment type="similarity">
    <text evidence="1">Belongs to the peptidase M17 family.</text>
</comment>
<name>AMPA_RHOE4</name>
<gene>
    <name evidence="1" type="primary">pepA</name>
    <name type="ordered locus">RER_36150</name>
</gene>
<evidence type="ECO:0000255" key="1">
    <source>
        <dbReference type="HAMAP-Rule" id="MF_00181"/>
    </source>
</evidence>
<reference key="1">
    <citation type="submission" date="2005-03" db="EMBL/GenBank/DDBJ databases">
        <title>Comparison of the complete genome sequences of Rhodococcus erythropolis PR4 and Rhodococcus opacus B4.</title>
        <authorList>
            <person name="Takarada H."/>
            <person name="Sekine M."/>
            <person name="Hosoyama A."/>
            <person name="Yamada R."/>
            <person name="Fujisawa T."/>
            <person name="Omata S."/>
            <person name="Shimizu A."/>
            <person name="Tsukatani N."/>
            <person name="Tanikawa S."/>
            <person name="Fujita N."/>
            <person name="Harayama S."/>
        </authorList>
    </citation>
    <scope>NUCLEOTIDE SEQUENCE [LARGE SCALE GENOMIC DNA]</scope>
    <source>
        <strain>PR4 / NBRC 100887</strain>
    </source>
</reference>
<accession>C1A138</accession>
<dbReference type="EC" id="3.4.11.1" evidence="1"/>
<dbReference type="EC" id="3.4.11.10" evidence="1"/>
<dbReference type="EMBL" id="AP008957">
    <property type="protein sequence ID" value="BAH34323.1"/>
    <property type="molecule type" value="Genomic_DNA"/>
</dbReference>
<dbReference type="RefSeq" id="WP_020908114.1">
    <property type="nucleotide sequence ID" value="NC_012490.1"/>
</dbReference>
<dbReference type="SMR" id="C1A138"/>
<dbReference type="KEGG" id="rer:RER_36150"/>
<dbReference type="eggNOG" id="COG0260">
    <property type="taxonomic scope" value="Bacteria"/>
</dbReference>
<dbReference type="HOGENOM" id="CLU_013734_2_2_11"/>
<dbReference type="Proteomes" id="UP000002204">
    <property type="component" value="Chromosome"/>
</dbReference>
<dbReference type="GO" id="GO:0005737">
    <property type="term" value="C:cytoplasm"/>
    <property type="evidence" value="ECO:0007669"/>
    <property type="project" value="UniProtKB-SubCell"/>
</dbReference>
<dbReference type="GO" id="GO:0030145">
    <property type="term" value="F:manganese ion binding"/>
    <property type="evidence" value="ECO:0007669"/>
    <property type="project" value="UniProtKB-UniRule"/>
</dbReference>
<dbReference type="GO" id="GO:0070006">
    <property type="term" value="F:metalloaminopeptidase activity"/>
    <property type="evidence" value="ECO:0007669"/>
    <property type="project" value="InterPro"/>
</dbReference>
<dbReference type="GO" id="GO:0006508">
    <property type="term" value="P:proteolysis"/>
    <property type="evidence" value="ECO:0007669"/>
    <property type="project" value="UniProtKB-KW"/>
</dbReference>
<dbReference type="CDD" id="cd00433">
    <property type="entry name" value="Peptidase_M17"/>
    <property type="match status" value="1"/>
</dbReference>
<dbReference type="Gene3D" id="3.40.220.10">
    <property type="entry name" value="Leucine Aminopeptidase, subunit E, domain 1"/>
    <property type="match status" value="1"/>
</dbReference>
<dbReference type="Gene3D" id="3.40.630.10">
    <property type="entry name" value="Zn peptidases"/>
    <property type="match status" value="1"/>
</dbReference>
<dbReference type="HAMAP" id="MF_00181">
    <property type="entry name" value="Cytosol_peptidase_M17"/>
    <property type="match status" value="1"/>
</dbReference>
<dbReference type="InterPro" id="IPR011356">
    <property type="entry name" value="Leucine_aapep/pepB"/>
</dbReference>
<dbReference type="InterPro" id="IPR043472">
    <property type="entry name" value="Macro_dom-like"/>
</dbReference>
<dbReference type="InterPro" id="IPR000819">
    <property type="entry name" value="Peptidase_M17_C"/>
</dbReference>
<dbReference type="InterPro" id="IPR023042">
    <property type="entry name" value="Peptidase_M17_leu_NH2_pept"/>
</dbReference>
<dbReference type="InterPro" id="IPR008283">
    <property type="entry name" value="Peptidase_M17_N"/>
</dbReference>
<dbReference type="NCBIfam" id="NF002073">
    <property type="entry name" value="PRK00913.1-2"/>
    <property type="match status" value="1"/>
</dbReference>
<dbReference type="PANTHER" id="PTHR11963:SF23">
    <property type="entry name" value="CYTOSOL AMINOPEPTIDASE"/>
    <property type="match status" value="1"/>
</dbReference>
<dbReference type="PANTHER" id="PTHR11963">
    <property type="entry name" value="LEUCINE AMINOPEPTIDASE-RELATED"/>
    <property type="match status" value="1"/>
</dbReference>
<dbReference type="Pfam" id="PF00883">
    <property type="entry name" value="Peptidase_M17"/>
    <property type="match status" value="1"/>
</dbReference>
<dbReference type="Pfam" id="PF02789">
    <property type="entry name" value="Peptidase_M17_N"/>
    <property type="match status" value="1"/>
</dbReference>
<dbReference type="PRINTS" id="PR00481">
    <property type="entry name" value="LAMNOPPTDASE"/>
</dbReference>
<dbReference type="SUPFAM" id="SSF52949">
    <property type="entry name" value="Macro domain-like"/>
    <property type="match status" value="1"/>
</dbReference>
<dbReference type="SUPFAM" id="SSF53187">
    <property type="entry name" value="Zn-dependent exopeptidases"/>
    <property type="match status" value="1"/>
</dbReference>
<dbReference type="PROSITE" id="PS00631">
    <property type="entry name" value="CYTOSOL_AP"/>
    <property type="match status" value="1"/>
</dbReference>
<proteinExistence type="inferred from homology"/>
<organism>
    <name type="scientific">Rhodococcus erythropolis (strain PR4 / NBRC 100887)</name>
    <dbReference type="NCBI Taxonomy" id="234621"/>
    <lineage>
        <taxon>Bacteria</taxon>
        <taxon>Bacillati</taxon>
        <taxon>Actinomycetota</taxon>
        <taxon>Actinomycetes</taxon>
        <taxon>Mycobacteriales</taxon>
        <taxon>Nocardiaceae</taxon>
        <taxon>Rhodococcus</taxon>
        <taxon>Rhodococcus erythropolis group</taxon>
    </lineage>
</organism>
<protein>
    <recommendedName>
        <fullName evidence="1">Probable cytosol aminopeptidase</fullName>
        <ecNumber evidence="1">3.4.11.1</ecNumber>
    </recommendedName>
    <alternativeName>
        <fullName evidence="1">Leucine aminopeptidase</fullName>
        <shortName evidence="1">LAP</shortName>
        <ecNumber evidence="1">3.4.11.10</ecNumber>
    </alternativeName>
    <alternativeName>
        <fullName evidence="1">Leucyl aminopeptidase</fullName>
    </alternativeName>
</protein>
<feature type="chain" id="PRO_1000203838" description="Probable cytosol aminopeptidase">
    <location>
        <begin position="1"/>
        <end position="505"/>
    </location>
</feature>
<feature type="active site" evidence="1">
    <location>
        <position position="281"/>
    </location>
</feature>
<feature type="active site" evidence="1">
    <location>
        <position position="355"/>
    </location>
</feature>
<feature type="binding site" evidence="1">
    <location>
        <position position="269"/>
    </location>
    <ligand>
        <name>Mn(2+)</name>
        <dbReference type="ChEBI" id="CHEBI:29035"/>
        <label>2</label>
    </ligand>
</feature>
<feature type="binding site" evidence="1">
    <location>
        <position position="274"/>
    </location>
    <ligand>
        <name>Mn(2+)</name>
        <dbReference type="ChEBI" id="CHEBI:29035"/>
        <label>1</label>
    </ligand>
</feature>
<feature type="binding site" evidence="1">
    <location>
        <position position="274"/>
    </location>
    <ligand>
        <name>Mn(2+)</name>
        <dbReference type="ChEBI" id="CHEBI:29035"/>
        <label>2</label>
    </ligand>
</feature>
<feature type="binding site" evidence="1">
    <location>
        <position position="292"/>
    </location>
    <ligand>
        <name>Mn(2+)</name>
        <dbReference type="ChEBI" id="CHEBI:29035"/>
        <label>2</label>
    </ligand>
</feature>
<feature type="binding site" evidence="1">
    <location>
        <position position="351"/>
    </location>
    <ligand>
        <name>Mn(2+)</name>
        <dbReference type="ChEBI" id="CHEBI:29035"/>
        <label>1</label>
    </ligand>
</feature>
<feature type="binding site" evidence="1">
    <location>
        <position position="353"/>
    </location>
    <ligand>
        <name>Mn(2+)</name>
        <dbReference type="ChEBI" id="CHEBI:29035"/>
        <label>1</label>
    </ligand>
</feature>
<feature type="binding site" evidence="1">
    <location>
        <position position="353"/>
    </location>
    <ligand>
        <name>Mn(2+)</name>
        <dbReference type="ChEBI" id="CHEBI:29035"/>
        <label>2</label>
    </ligand>
</feature>
<keyword id="KW-0031">Aminopeptidase</keyword>
<keyword id="KW-0963">Cytoplasm</keyword>
<keyword id="KW-0378">Hydrolase</keyword>
<keyword id="KW-0464">Manganese</keyword>
<keyword id="KW-0479">Metal-binding</keyword>
<keyword id="KW-0645">Protease</keyword>
<sequence>MSTRTARSLGPDLVLAGTVAKRAEILVVGLTSGPDGPEIALSEGIVAEDVLAEILDSLIAVGATGKPEQLTRVPAPSALSVTSVLAVGLGSADKLDSEQIRKSAGAAARSLSGIDTVATTLSILDLGAAAEGFALGAYSFTEFKSSMTAPGPDSQPLARVELLVPSPRTKETKATLARSAAIAEAVATAREFVNTPPSHLYPAEFAARAKALGVEAGLTVQVLDEKALEKGGYGGIIGVGKGSSRQPRLVRLEYASKKRGARKVALVGKGITFDTGGISIKPAAGMENMTSDMGGAAAVISTVVLAAKLGLPVNVVAYVPMAENMPSATAQRPGDVLTQYGGITIEVVNTDAEGRLILADAMVRAGEDNPDYMIDTATLTGAQMVALGNRTPGVMGTDEFRDRVASISQSVGENGWAMPLPEELRGDLDSKVADMANVTPHRWGGMLVAAHYLKEFVPEGVQWAHIDVAGPAYNTSGPWGYTGKGGTGVPVRTMISVLEDIAVNG</sequence>